<reference key="1">
    <citation type="journal article" date="2001" name="Genome Res.">
        <title>Sequence and analysis of chromosome I of the amitochondriate intracellular parasite Encephalitozoon cuniculi (Microspora).</title>
        <authorList>
            <person name="Peyret P."/>
            <person name="Katinka M.D."/>
            <person name="Duprat S."/>
            <person name="Duffieux F."/>
            <person name="Barbe V."/>
            <person name="Barbazanges M."/>
            <person name="Weissenbach J."/>
            <person name="Saurin W."/>
            <person name="Vivares C.P."/>
        </authorList>
    </citation>
    <scope>NUCLEOTIDE SEQUENCE [LARGE SCALE GENOMIC DNA]</scope>
    <source>
        <strain>GB-M1</strain>
    </source>
</reference>
<reference key="2">
    <citation type="journal article" date="2001" name="Nature">
        <title>Genome sequence and gene compaction of the eukaryote parasite Encephalitozoon cuniculi.</title>
        <authorList>
            <person name="Katinka M.D."/>
            <person name="Duprat S."/>
            <person name="Cornillot E."/>
            <person name="Metenier G."/>
            <person name="Thomarat F."/>
            <person name="Prensier G."/>
            <person name="Barbe V."/>
            <person name="Peyretaillade E."/>
            <person name="Brottier P."/>
            <person name="Wincker P."/>
            <person name="Delbac F."/>
            <person name="El Alaoui H."/>
            <person name="Peyret P."/>
            <person name="Saurin W."/>
            <person name="Gouy M."/>
            <person name="Weissenbach J."/>
            <person name="Vivares C.P."/>
        </authorList>
    </citation>
    <scope>NUCLEOTIDE SEQUENCE [LARGE SCALE GENOMIC DNA]</scope>
    <source>
        <strain>GB-M1</strain>
    </source>
</reference>
<reference key="3">
    <citation type="journal article" date="2009" name="BMC Genomics">
        <title>Identification of transcriptional signals in Encephalitozoon cuniculi widespread among Microsporidia phylum: support for accurate structural genome annotation.</title>
        <authorList>
            <person name="Peyretaillade E."/>
            <person name="Goncalves O."/>
            <person name="Terrat S."/>
            <person name="Dugat-Bony E."/>
            <person name="Wincker P."/>
            <person name="Cornman R.S."/>
            <person name="Evans J.D."/>
            <person name="Delbac F."/>
            <person name="Peyret P."/>
        </authorList>
    </citation>
    <scope>GENOME REANNOTATION</scope>
    <source>
        <strain>GB-M1</strain>
    </source>
</reference>
<reference key="4">
    <citation type="journal article" date="2006" name="Proteomics">
        <title>Proteomic analysis of the eukaryotic parasite Encephalitozoon cuniculi (microsporidia): a reference map for proteins expressed in late sporogonial stages.</title>
        <authorList>
            <person name="Brosson D."/>
            <person name="Kuhn L."/>
            <person name="Delbac F."/>
            <person name="Garin J."/>
            <person name="Vivares C.P."/>
            <person name="Texier C."/>
        </authorList>
    </citation>
    <scope>IDENTIFICATION BY MASS SPECTROMETRY [LARGE SCALE ANALYSIS]</scope>
    <scope>DEVELOPMENTAL STAGE</scope>
    <scope>SUBCELLULAR LOCATION</scope>
</reference>
<organism>
    <name type="scientific">Encephalitozoon cuniculi (strain GB-M1)</name>
    <name type="common">Microsporidian parasite</name>
    <dbReference type="NCBI Taxonomy" id="284813"/>
    <lineage>
        <taxon>Eukaryota</taxon>
        <taxon>Fungi</taxon>
        <taxon>Fungi incertae sedis</taxon>
        <taxon>Microsporidia</taxon>
        <taxon>Unikaryonidae</taxon>
        <taxon>Encephalitozoon</taxon>
    </lineage>
</organism>
<dbReference type="EMBL" id="AL391737">
    <property type="protein sequence ID" value="CAD24911.2"/>
    <property type="molecule type" value="Genomic_DNA"/>
</dbReference>
<dbReference type="RefSeq" id="XP_965876.1">
    <property type="nucleotide sequence ID" value="XM_960783.1"/>
</dbReference>
<dbReference type="SMR" id="Q8SWP1"/>
<dbReference type="VEuPathDB" id="MicrosporidiaDB:ECU01_0420"/>
<dbReference type="HOGENOM" id="CLU_098346_0_0_1"/>
<dbReference type="InParanoid" id="Q8SWP1"/>
<dbReference type="OrthoDB" id="2194161at2759"/>
<dbReference type="Proteomes" id="UP000000819">
    <property type="component" value="Chromosome I"/>
</dbReference>
<dbReference type="GO" id="GO:0031160">
    <property type="term" value="C:spore wall"/>
    <property type="evidence" value="ECO:0007669"/>
    <property type="project" value="UniProtKB-SubCell"/>
</dbReference>
<dbReference type="Gene3D" id="1.20.1270.60">
    <property type="entry name" value="Arfaptin homology (AH) domain/BAR domain"/>
    <property type="match status" value="1"/>
</dbReference>
<dbReference type="InterPro" id="IPR027267">
    <property type="entry name" value="AH/BAR_dom_sf"/>
</dbReference>
<dbReference type="InterPro" id="IPR018859">
    <property type="entry name" value="BAR_dom-cont"/>
</dbReference>
<dbReference type="Pfam" id="PF10455">
    <property type="entry name" value="BAR_2"/>
    <property type="match status" value="1"/>
</dbReference>
<dbReference type="SUPFAM" id="SSF103657">
    <property type="entry name" value="BAR/IMD domain-like"/>
    <property type="match status" value="1"/>
</dbReference>
<name>SWP12_ENCCU</name>
<gene>
    <name type="primary">SWP12</name>
    <name type="ordered locus">ECU01_0420</name>
</gene>
<keyword id="KW-1185">Reference proteome</keyword>
<comment type="subcellular location">
    <subcellularLocation>
        <location evidence="1">Spore wall</location>
    </subcellularLocation>
</comment>
<comment type="developmental stage">
    <text evidence="3">Expressed in late sporogonial stages.</text>
</comment>
<comment type="similarity">
    <text evidence="4">Belongs to the SWP12 family.</text>
</comment>
<proteinExistence type="evidence at protein level"/>
<evidence type="ECO:0000250" key="1"/>
<evidence type="ECO:0000256" key="2">
    <source>
        <dbReference type="SAM" id="MobiDB-lite"/>
    </source>
</evidence>
<evidence type="ECO:0000269" key="3">
    <source>
    </source>
</evidence>
<evidence type="ECO:0000305" key="4"/>
<accession>Q8SWP1</accession>
<sequence>MDKETVKDIQRSIAMKLNRVEYTEVPLIEGYSEAEDCYKRFRDSLKKISDSITWLMTYEYGGSKMKSLYSKMTMITSTSRIGQFKNYDIYEANGLIGLEFSKIGVASSLSDTGKKYSKAYMDISRYKLEMNSRLEQQLKKISDLRDHSNAIDKKRKKVSNIRYDLEMEKKSKEPKTPSMVSRENDMERTFKETSKEALKEMERFIGNDGVSGVLQKVAEAHRMFTEKSAKALEEVK</sequence>
<feature type="chain" id="PRO_0000382912" description="Spore wall protein 12">
    <location>
        <begin position="1"/>
        <end position="236"/>
    </location>
</feature>
<feature type="region of interest" description="Disordered" evidence="2">
    <location>
        <begin position="169"/>
        <end position="188"/>
    </location>
</feature>
<protein>
    <recommendedName>
        <fullName>Spore wall protein 12</fullName>
    </recommendedName>
</protein>